<evidence type="ECO:0000255" key="1">
    <source>
        <dbReference type="HAMAP-Rule" id="MF_00144"/>
    </source>
</evidence>
<name>MNMA_NEOSM</name>
<proteinExistence type="inferred from homology"/>
<gene>
    <name evidence="1" type="primary">mnmA</name>
    <name type="ordered locus">NSE_0468</name>
</gene>
<sequence length="371" mass="41283">MKLMQELAEIIPGKAYNDVKVMVAMSGGVDSSTVAAYLHRVGYKVIGVTLQLHNNFTSTQTNRKTCCAGSDIFDAKRVAAQFGFLHYVVNMEETFRKEVIENFAESYLKGETPVPCVKCNQTVKFRDLMKIAKSLSVDALATGHYVRRLTTTNGVELHKGIDPSKDQSYFLFNTTREQLEFLRFPLGNLKKSETRDLARKLSVDISEKPESQDICFVNGKSYADVIKKFRPDAQRPGKILSTDGEVLGTHNGTIHYTIGQRHGLQLSAPIPLYVVKIDAQNNIIIVGTRDKLQQRSLYVKEVNWLDRKELTAGLECEVKLRSGADTVKGYLYPNGELLKVSLAEEPKCAIAPGQACVMYHGSKVLGGGWIV</sequence>
<comment type="function">
    <text evidence="1">Catalyzes the 2-thiolation of uridine at the wobble position (U34) of tRNA, leading to the formation of s(2)U34.</text>
</comment>
<comment type="catalytic activity">
    <reaction evidence="1">
        <text>S-sulfanyl-L-cysteinyl-[protein] + uridine(34) in tRNA + AH2 + ATP = 2-thiouridine(34) in tRNA + L-cysteinyl-[protein] + A + AMP + diphosphate + H(+)</text>
        <dbReference type="Rhea" id="RHEA:47032"/>
        <dbReference type="Rhea" id="RHEA-COMP:10131"/>
        <dbReference type="Rhea" id="RHEA-COMP:11726"/>
        <dbReference type="Rhea" id="RHEA-COMP:11727"/>
        <dbReference type="Rhea" id="RHEA-COMP:11728"/>
        <dbReference type="ChEBI" id="CHEBI:13193"/>
        <dbReference type="ChEBI" id="CHEBI:15378"/>
        <dbReference type="ChEBI" id="CHEBI:17499"/>
        <dbReference type="ChEBI" id="CHEBI:29950"/>
        <dbReference type="ChEBI" id="CHEBI:30616"/>
        <dbReference type="ChEBI" id="CHEBI:33019"/>
        <dbReference type="ChEBI" id="CHEBI:61963"/>
        <dbReference type="ChEBI" id="CHEBI:65315"/>
        <dbReference type="ChEBI" id="CHEBI:87170"/>
        <dbReference type="ChEBI" id="CHEBI:456215"/>
        <dbReference type="EC" id="2.8.1.13"/>
    </reaction>
</comment>
<comment type="subcellular location">
    <subcellularLocation>
        <location evidence="1">Cytoplasm</location>
    </subcellularLocation>
</comment>
<comment type="similarity">
    <text evidence="1">Belongs to the MnmA/TRMU family.</text>
</comment>
<reference key="1">
    <citation type="journal article" date="2006" name="PLoS Genet.">
        <title>Comparative genomics of emerging human ehrlichiosis agents.</title>
        <authorList>
            <person name="Dunning Hotopp J.C."/>
            <person name="Lin M."/>
            <person name="Madupu R."/>
            <person name="Crabtree J."/>
            <person name="Angiuoli S.V."/>
            <person name="Eisen J.A."/>
            <person name="Seshadri R."/>
            <person name="Ren Q."/>
            <person name="Wu M."/>
            <person name="Utterback T.R."/>
            <person name="Smith S."/>
            <person name="Lewis M."/>
            <person name="Khouri H."/>
            <person name="Zhang C."/>
            <person name="Niu H."/>
            <person name="Lin Q."/>
            <person name="Ohashi N."/>
            <person name="Zhi N."/>
            <person name="Nelson W.C."/>
            <person name="Brinkac L.M."/>
            <person name="Dodson R.J."/>
            <person name="Rosovitz M.J."/>
            <person name="Sundaram J.P."/>
            <person name="Daugherty S.C."/>
            <person name="Davidsen T."/>
            <person name="Durkin A.S."/>
            <person name="Gwinn M.L."/>
            <person name="Haft D.H."/>
            <person name="Selengut J.D."/>
            <person name="Sullivan S.A."/>
            <person name="Zafar N."/>
            <person name="Zhou L."/>
            <person name="Benahmed F."/>
            <person name="Forberger H."/>
            <person name="Halpin R."/>
            <person name="Mulligan S."/>
            <person name="Robinson J."/>
            <person name="White O."/>
            <person name="Rikihisa Y."/>
            <person name="Tettelin H."/>
        </authorList>
    </citation>
    <scope>NUCLEOTIDE SEQUENCE [LARGE SCALE GENOMIC DNA]</scope>
    <source>
        <strain>ATCC VR-367 / Miyayama</strain>
    </source>
</reference>
<organism>
    <name type="scientific">Neorickettsia sennetsu (strain ATCC VR-367 / Miyayama)</name>
    <name type="common">Ehrlichia sennetsu</name>
    <dbReference type="NCBI Taxonomy" id="222891"/>
    <lineage>
        <taxon>Bacteria</taxon>
        <taxon>Pseudomonadati</taxon>
        <taxon>Pseudomonadota</taxon>
        <taxon>Alphaproteobacteria</taxon>
        <taxon>Rickettsiales</taxon>
        <taxon>Anaplasmataceae</taxon>
        <taxon>Neorickettsia</taxon>
    </lineage>
</organism>
<keyword id="KW-0067">ATP-binding</keyword>
<keyword id="KW-0963">Cytoplasm</keyword>
<keyword id="KW-1015">Disulfide bond</keyword>
<keyword id="KW-0547">Nucleotide-binding</keyword>
<keyword id="KW-0694">RNA-binding</keyword>
<keyword id="KW-0808">Transferase</keyword>
<keyword id="KW-0819">tRNA processing</keyword>
<keyword id="KW-0820">tRNA-binding</keyword>
<protein>
    <recommendedName>
        <fullName evidence="1">tRNA-specific 2-thiouridylase MnmA</fullName>
        <ecNumber evidence="1">2.8.1.13</ecNumber>
    </recommendedName>
</protein>
<accession>Q2GDU3</accession>
<dbReference type="EC" id="2.8.1.13" evidence="1"/>
<dbReference type="EMBL" id="CP000237">
    <property type="protein sequence ID" value="ABD46075.1"/>
    <property type="molecule type" value="Genomic_DNA"/>
</dbReference>
<dbReference type="SMR" id="Q2GDU3"/>
<dbReference type="STRING" id="222891.NSE_0468"/>
<dbReference type="KEGG" id="nse:NSE_0468"/>
<dbReference type="eggNOG" id="COG0482">
    <property type="taxonomic scope" value="Bacteria"/>
</dbReference>
<dbReference type="HOGENOM" id="CLU_035188_0_1_5"/>
<dbReference type="Proteomes" id="UP000001942">
    <property type="component" value="Chromosome"/>
</dbReference>
<dbReference type="GO" id="GO:0005737">
    <property type="term" value="C:cytoplasm"/>
    <property type="evidence" value="ECO:0007669"/>
    <property type="project" value="UniProtKB-SubCell"/>
</dbReference>
<dbReference type="GO" id="GO:0005524">
    <property type="term" value="F:ATP binding"/>
    <property type="evidence" value="ECO:0007669"/>
    <property type="project" value="UniProtKB-KW"/>
</dbReference>
<dbReference type="GO" id="GO:0000049">
    <property type="term" value="F:tRNA binding"/>
    <property type="evidence" value="ECO:0007669"/>
    <property type="project" value="UniProtKB-KW"/>
</dbReference>
<dbReference type="GO" id="GO:0103016">
    <property type="term" value="F:tRNA-uridine 2-sulfurtransferase activity"/>
    <property type="evidence" value="ECO:0007669"/>
    <property type="project" value="UniProtKB-EC"/>
</dbReference>
<dbReference type="GO" id="GO:0002143">
    <property type="term" value="P:tRNA wobble position uridine thiolation"/>
    <property type="evidence" value="ECO:0007669"/>
    <property type="project" value="TreeGrafter"/>
</dbReference>
<dbReference type="CDD" id="cd01998">
    <property type="entry name" value="MnmA_TRMU-like"/>
    <property type="match status" value="1"/>
</dbReference>
<dbReference type="FunFam" id="2.30.30.280:FF:000001">
    <property type="entry name" value="tRNA-specific 2-thiouridylase MnmA"/>
    <property type="match status" value="1"/>
</dbReference>
<dbReference type="FunFam" id="3.40.50.620:FF:000115">
    <property type="entry name" value="tRNA-specific 2-thiouridylase MnmA"/>
    <property type="match status" value="1"/>
</dbReference>
<dbReference type="Gene3D" id="2.30.30.280">
    <property type="entry name" value="Adenine nucleotide alpha hydrolases-like domains"/>
    <property type="match status" value="1"/>
</dbReference>
<dbReference type="Gene3D" id="3.40.50.620">
    <property type="entry name" value="HUPs"/>
    <property type="match status" value="1"/>
</dbReference>
<dbReference type="Gene3D" id="2.40.30.10">
    <property type="entry name" value="Translation factors"/>
    <property type="match status" value="1"/>
</dbReference>
<dbReference type="HAMAP" id="MF_00144">
    <property type="entry name" value="tRNA_thiouridyl_MnmA"/>
    <property type="match status" value="1"/>
</dbReference>
<dbReference type="InterPro" id="IPR004506">
    <property type="entry name" value="MnmA-like"/>
</dbReference>
<dbReference type="InterPro" id="IPR046885">
    <property type="entry name" value="MnmA-like_C"/>
</dbReference>
<dbReference type="InterPro" id="IPR046884">
    <property type="entry name" value="MnmA-like_central"/>
</dbReference>
<dbReference type="InterPro" id="IPR023382">
    <property type="entry name" value="MnmA-like_central_sf"/>
</dbReference>
<dbReference type="InterPro" id="IPR014729">
    <property type="entry name" value="Rossmann-like_a/b/a_fold"/>
</dbReference>
<dbReference type="NCBIfam" id="NF001138">
    <property type="entry name" value="PRK00143.1"/>
    <property type="match status" value="1"/>
</dbReference>
<dbReference type="NCBIfam" id="TIGR00420">
    <property type="entry name" value="trmU"/>
    <property type="match status" value="1"/>
</dbReference>
<dbReference type="PANTHER" id="PTHR11933:SF5">
    <property type="entry name" value="MITOCHONDRIAL TRNA-SPECIFIC 2-THIOURIDYLASE 1"/>
    <property type="match status" value="1"/>
</dbReference>
<dbReference type="PANTHER" id="PTHR11933">
    <property type="entry name" value="TRNA 5-METHYLAMINOMETHYL-2-THIOURIDYLATE -METHYLTRANSFERASE"/>
    <property type="match status" value="1"/>
</dbReference>
<dbReference type="Pfam" id="PF03054">
    <property type="entry name" value="tRNA_Me_trans"/>
    <property type="match status" value="1"/>
</dbReference>
<dbReference type="Pfam" id="PF20258">
    <property type="entry name" value="tRNA_Me_trans_C"/>
    <property type="match status" value="1"/>
</dbReference>
<dbReference type="Pfam" id="PF20259">
    <property type="entry name" value="tRNA_Me_trans_M"/>
    <property type="match status" value="1"/>
</dbReference>
<dbReference type="SUPFAM" id="SSF52402">
    <property type="entry name" value="Adenine nucleotide alpha hydrolases-like"/>
    <property type="match status" value="1"/>
</dbReference>
<feature type="chain" id="PRO_0000349713" description="tRNA-specific 2-thiouridylase MnmA">
    <location>
        <begin position="1"/>
        <end position="371"/>
    </location>
</feature>
<feature type="region of interest" description="Interaction with tRNA" evidence="1">
    <location>
        <begin position="165"/>
        <end position="167"/>
    </location>
</feature>
<feature type="active site" description="Nucleophile" evidence="1">
    <location>
        <position position="119"/>
    </location>
</feature>
<feature type="active site" description="Cysteine persulfide intermediate" evidence="1">
    <location>
        <position position="215"/>
    </location>
</feature>
<feature type="binding site" evidence="1">
    <location>
        <begin position="24"/>
        <end position="31"/>
    </location>
    <ligand>
        <name>ATP</name>
        <dbReference type="ChEBI" id="CHEBI:30616"/>
    </ligand>
</feature>
<feature type="binding site" evidence="1">
    <location>
        <position position="50"/>
    </location>
    <ligand>
        <name>ATP</name>
        <dbReference type="ChEBI" id="CHEBI:30616"/>
    </ligand>
</feature>
<feature type="binding site" evidence="1">
    <location>
        <position position="143"/>
    </location>
    <ligand>
        <name>ATP</name>
        <dbReference type="ChEBI" id="CHEBI:30616"/>
    </ligand>
</feature>
<feature type="site" description="Interaction with tRNA" evidence="1">
    <location>
        <position position="144"/>
    </location>
</feature>
<feature type="site" description="Interaction with tRNA" evidence="1">
    <location>
        <position position="354"/>
    </location>
</feature>
<feature type="disulfide bond" description="Alternate" evidence="1">
    <location>
        <begin position="119"/>
        <end position="215"/>
    </location>
</feature>